<organism>
    <name type="scientific">Shewanella sp. (strain MR-4)</name>
    <dbReference type="NCBI Taxonomy" id="60480"/>
    <lineage>
        <taxon>Bacteria</taxon>
        <taxon>Pseudomonadati</taxon>
        <taxon>Pseudomonadota</taxon>
        <taxon>Gammaproteobacteria</taxon>
        <taxon>Alteromonadales</taxon>
        <taxon>Shewanellaceae</taxon>
        <taxon>Shewanella</taxon>
    </lineage>
</organism>
<protein>
    <recommendedName>
        <fullName evidence="1">DNA gyrase inhibitor YacG</fullName>
    </recommendedName>
</protein>
<feature type="chain" id="PRO_1000056994" description="DNA gyrase inhibitor YacG">
    <location>
        <begin position="1"/>
        <end position="69"/>
    </location>
</feature>
<feature type="binding site" evidence="1">
    <location>
        <position position="7"/>
    </location>
    <ligand>
        <name>Zn(2+)</name>
        <dbReference type="ChEBI" id="CHEBI:29105"/>
    </ligand>
</feature>
<feature type="binding site" evidence="1">
    <location>
        <position position="10"/>
    </location>
    <ligand>
        <name>Zn(2+)</name>
        <dbReference type="ChEBI" id="CHEBI:29105"/>
    </ligand>
</feature>
<feature type="binding site" evidence="1">
    <location>
        <position position="26"/>
    </location>
    <ligand>
        <name>Zn(2+)</name>
        <dbReference type="ChEBI" id="CHEBI:29105"/>
    </ligand>
</feature>
<feature type="binding site" evidence="1">
    <location>
        <position position="30"/>
    </location>
    <ligand>
        <name>Zn(2+)</name>
        <dbReference type="ChEBI" id="CHEBI:29105"/>
    </ligand>
</feature>
<dbReference type="EMBL" id="CP000446">
    <property type="protein sequence ID" value="ABI37495.1"/>
    <property type="molecule type" value="Genomic_DNA"/>
</dbReference>
<dbReference type="RefSeq" id="WP_011621218.1">
    <property type="nucleotide sequence ID" value="NC_008321.1"/>
</dbReference>
<dbReference type="SMR" id="Q0HN72"/>
<dbReference type="GeneID" id="94726410"/>
<dbReference type="KEGG" id="she:Shewmr4_0415"/>
<dbReference type="HOGENOM" id="CLU_178280_1_0_6"/>
<dbReference type="GO" id="GO:0008657">
    <property type="term" value="F:DNA topoisomerase type II (double strand cut, ATP-hydrolyzing) inhibitor activity"/>
    <property type="evidence" value="ECO:0007669"/>
    <property type="project" value="UniProtKB-UniRule"/>
</dbReference>
<dbReference type="GO" id="GO:0008270">
    <property type="term" value="F:zinc ion binding"/>
    <property type="evidence" value="ECO:0007669"/>
    <property type="project" value="UniProtKB-UniRule"/>
</dbReference>
<dbReference type="GO" id="GO:0006355">
    <property type="term" value="P:regulation of DNA-templated transcription"/>
    <property type="evidence" value="ECO:0007669"/>
    <property type="project" value="InterPro"/>
</dbReference>
<dbReference type="Gene3D" id="3.30.50.10">
    <property type="entry name" value="Erythroid Transcription Factor GATA-1, subunit A"/>
    <property type="match status" value="1"/>
</dbReference>
<dbReference type="HAMAP" id="MF_00649">
    <property type="entry name" value="DNA_gyrase_inhibitor_YacG"/>
    <property type="match status" value="1"/>
</dbReference>
<dbReference type="InterPro" id="IPR005584">
    <property type="entry name" value="DNA_gyrase_inhibitor_YacG"/>
</dbReference>
<dbReference type="InterPro" id="IPR013088">
    <property type="entry name" value="Znf_NHR/GATA"/>
</dbReference>
<dbReference type="NCBIfam" id="NF001638">
    <property type="entry name" value="PRK00418.1"/>
    <property type="match status" value="1"/>
</dbReference>
<dbReference type="PANTHER" id="PTHR36150">
    <property type="entry name" value="DNA GYRASE INHIBITOR YACG"/>
    <property type="match status" value="1"/>
</dbReference>
<dbReference type="PANTHER" id="PTHR36150:SF1">
    <property type="entry name" value="DNA GYRASE INHIBITOR YACG"/>
    <property type="match status" value="1"/>
</dbReference>
<dbReference type="Pfam" id="PF03884">
    <property type="entry name" value="YacG"/>
    <property type="match status" value="1"/>
</dbReference>
<dbReference type="SUPFAM" id="SSF57716">
    <property type="entry name" value="Glucocorticoid receptor-like (DNA-binding domain)"/>
    <property type="match status" value="1"/>
</dbReference>
<proteinExistence type="inferred from homology"/>
<gene>
    <name evidence="1" type="primary">yacG</name>
    <name type="ordered locus">Shewmr4_0415</name>
</gene>
<reference key="1">
    <citation type="submission" date="2006-08" db="EMBL/GenBank/DDBJ databases">
        <title>Complete sequence of Shewanella sp. MR-4.</title>
        <authorList>
            <consortium name="US DOE Joint Genome Institute"/>
            <person name="Copeland A."/>
            <person name="Lucas S."/>
            <person name="Lapidus A."/>
            <person name="Barry K."/>
            <person name="Detter J.C."/>
            <person name="Glavina del Rio T."/>
            <person name="Hammon N."/>
            <person name="Israni S."/>
            <person name="Dalin E."/>
            <person name="Tice H."/>
            <person name="Pitluck S."/>
            <person name="Kiss H."/>
            <person name="Brettin T."/>
            <person name="Bruce D."/>
            <person name="Han C."/>
            <person name="Tapia R."/>
            <person name="Gilna P."/>
            <person name="Schmutz J."/>
            <person name="Larimer F."/>
            <person name="Land M."/>
            <person name="Hauser L."/>
            <person name="Kyrpides N."/>
            <person name="Mikhailova N."/>
            <person name="Nealson K."/>
            <person name="Konstantinidis K."/>
            <person name="Klappenbach J."/>
            <person name="Tiedje J."/>
            <person name="Richardson P."/>
        </authorList>
    </citation>
    <scope>NUCLEOTIDE SEQUENCE [LARGE SCALE GENOMIC DNA]</scope>
    <source>
        <strain>MR-4</strain>
    </source>
</reference>
<comment type="function">
    <text evidence="1">Inhibits all the catalytic activities of DNA gyrase by preventing its interaction with DNA. Acts by binding directly to the C-terminal domain of GyrB, which probably disrupts DNA binding by the gyrase.</text>
</comment>
<comment type="cofactor">
    <cofactor evidence="1">
        <name>Zn(2+)</name>
        <dbReference type="ChEBI" id="CHEBI:29105"/>
    </cofactor>
    <text evidence="1">Binds 1 zinc ion.</text>
</comment>
<comment type="subunit">
    <text evidence="1">Interacts with GyrB.</text>
</comment>
<comment type="similarity">
    <text evidence="1">Belongs to the DNA gyrase inhibitor YacG family.</text>
</comment>
<accession>Q0HN72</accession>
<evidence type="ECO:0000255" key="1">
    <source>
        <dbReference type="HAMAP-Rule" id="MF_00649"/>
    </source>
</evidence>
<sequence>MPLTVNCPICKTPVEWVPQSEFKPFCSERCKMIDLGDWASEKHAIPVKSEFDLDALDELGYDEESFFKE</sequence>
<keyword id="KW-0479">Metal-binding</keyword>
<keyword id="KW-0862">Zinc</keyword>
<name>YACG_SHESM</name>